<protein>
    <recommendedName>
        <fullName evidence="1">Undecaprenyl-phosphate 4-deoxy-4-formamido-L-arabinose transferase</fullName>
        <ecNumber evidence="1">2.4.2.53</ecNumber>
    </recommendedName>
    <alternativeName>
        <fullName evidence="1">Undecaprenyl-phosphate Ara4FN transferase</fullName>
        <shortName evidence="1">Ara4FN transferase</shortName>
    </alternativeName>
</protein>
<comment type="function">
    <text evidence="1">Catalyzes the transfer of 4-deoxy-4-formamido-L-arabinose from UDP to undecaprenyl phosphate. The modified arabinose is attached to lipid A and is required for resistance to polymyxin and cationic antimicrobial peptides.</text>
</comment>
<comment type="catalytic activity">
    <reaction evidence="1">
        <text>UDP-4-deoxy-4-formamido-beta-L-arabinose + di-trans,octa-cis-undecaprenyl phosphate = 4-deoxy-4-formamido-alpha-L-arabinopyranosyl di-trans,octa-cis-undecaprenyl phosphate + UDP</text>
        <dbReference type="Rhea" id="RHEA:27722"/>
        <dbReference type="ChEBI" id="CHEBI:58223"/>
        <dbReference type="ChEBI" id="CHEBI:58709"/>
        <dbReference type="ChEBI" id="CHEBI:58909"/>
        <dbReference type="ChEBI" id="CHEBI:60392"/>
        <dbReference type="EC" id="2.4.2.53"/>
    </reaction>
</comment>
<comment type="pathway">
    <text evidence="1">Glycolipid biosynthesis; 4-amino-4-deoxy-alpha-L-arabinose undecaprenyl phosphate biosynthesis; 4-amino-4-deoxy-alpha-L-arabinose undecaprenyl phosphate from UDP-4-deoxy-4-formamido-beta-L-arabinose and undecaprenyl phosphate: step 1/2.</text>
</comment>
<comment type="pathway">
    <text evidence="1">Bacterial outer membrane biogenesis; lipopolysaccharide biosynthesis.</text>
</comment>
<comment type="subcellular location">
    <subcellularLocation>
        <location evidence="1">Cell inner membrane</location>
        <topology evidence="1">Multi-pass membrane protein</topology>
    </subcellularLocation>
</comment>
<comment type="similarity">
    <text evidence="1">Belongs to the glycosyltransferase 2 family.</text>
</comment>
<reference key="1">
    <citation type="journal article" date="2006" name="Genome Biol.">
        <title>Genomic analysis reveals that Pseudomonas aeruginosa virulence is combinatorial.</title>
        <authorList>
            <person name="Lee D.G."/>
            <person name="Urbach J.M."/>
            <person name="Wu G."/>
            <person name="Liberati N.T."/>
            <person name="Feinbaum R.L."/>
            <person name="Miyata S."/>
            <person name="Diggins L.T."/>
            <person name="He J."/>
            <person name="Saucier M."/>
            <person name="Deziel E."/>
            <person name="Friedman L."/>
            <person name="Li L."/>
            <person name="Grills G."/>
            <person name="Montgomery K."/>
            <person name="Kucherlapati R."/>
            <person name="Rahme L.G."/>
            <person name="Ausubel F.M."/>
        </authorList>
    </citation>
    <scope>NUCLEOTIDE SEQUENCE [LARGE SCALE GENOMIC DNA]</scope>
    <source>
        <strain>UCBPP-PA14</strain>
    </source>
</reference>
<feature type="chain" id="PRO_0000380266" description="Undecaprenyl-phosphate 4-deoxy-4-formamido-L-arabinose transferase">
    <location>
        <begin position="1"/>
        <end position="339"/>
    </location>
</feature>
<feature type="transmembrane region" description="Helical" evidence="1">
    <location>
        <begin position="235"/>
        <end position="255"/>
    </location>
</feature>
<feature type="transmembrane region" description="Helical" evidence="1">
    <location>
        <begin position="269"/>
        <end position="289"/>
    </location>
</feature>
<proteinExistence type="inferred from homology"/>
<gene>
    <name evidence="1" type="primary">arnC</name>
    <name type="ordered locus">PA14_18360</name>
</gene>
<sequence>MKPYPIDLVSVVIPVYNEEASLPELLRRTEAACLELGRAFEIVLVDDGSRDRSAELLQAAAERDGSAVVAVILNRNYGQHAAILAGFEQSRGDLVITLDADLQNPPEEIPRLVERAAQGYDVVGSIRAERQDSAWRRWPSRLVNLAVQRSTGVAMHDYGCMLRAYRRSIVEAMLACRERSTFIPILANGFARHTCEIRVAHAERAHGESKYSAMRLLNLMFDLVTCMTTTPLRLLSLVGGGMALAGFLFALFLLVLRLAFGAAWAGNGLFVLFAVLFMFSGVQLLGMGLLGEYLGRMYSDVRARPRFFIERVVRATPSALPSALQRVGFTSSSSEPSTP</sequence>
<organism>
    <name type="scientific">Pseudomonas aeruginosa (strain UCBPP-PA14)</name>
    <dbReference type="NCBI Taxonomy" id="208963"/>
    <lineage>
        <taxon>Bacteria</taxon>
        <taxon>Pseudomonadati</taxon>
        <taxon>Pseudomonadota</taxon>
        <taxon>Gammaproteobacteria</taxon>
        <taxon>Pseudomonadales</taxon>
        <taxon>Pseudomonadaceae</taxon>
        <taxon>Pseudomonas</taxon>
    </lineage>
</organism>
<evidence type="ECO:0000255" key="1">
    <source>
        <dbReference type="HAMAP-Rule" id="MF_01164"/>
    </source>
</evidence>
<keyword id="KW-0046">Antibiotic resistance</keyword>
<keyword id="KW-0997">Cell inner membrane</keyword>
<keyword id="KW-1003">Cell membrane</keyword>
<keyword id="KW-0328">Glycosyltransferase</keyword>
<keyword id="KW-0441">Lipid A biosynthesis</keyword>
<keyword id="KW-0444">Lipid biosynthesis</keyword>
<keyword id="KW-0443">Lipid metabolism</keyword>
<keyword id="KW-0448">Lipopolysaccharide biosynthesis</keyword>
<keyword id="KW-0472">Membrane</keyword>
<keyword id="KW-0808">Transferase</keyword>
<keyword id="KW-0812">Transmembrane</keyword>
<keyword id="KW-1133">Transmembrane helix</keyword>
<dbReference type="EC" id="2.4.2.53" evidence="1"/>
<dbReference type="EMBL" id="CP000438">
    <property type="protein sequence ID" value="ABJ12787.1"/>
    <property type="molecule type" value="Genomic_DNA"/>
</dbReference>
<dbReference type="RefSeq" id="WP_003092115.1">
    <property type="nucleotide sequence ID" value="NZ_CP034244.1"/>
</dbReference>
<dbReference type="SMR" id="Q02R24"/>
<dbReference type="CAZy" id="GT2">
    <property type="family name" value="Glycosyltransferase Family 2"/>
</dbReference>
<dbReference type="KEGG" id="pau:PA14_18360"/>
<dbReference type="PseudoCAP" id="PA14_18360"/>
<dbReference type="HOGENOM" id="CLU_033536_0_0_6"/>
<dbReference type="BioCyc" id="PAER208963:G1G74-1515-MONOMER"/>
<dbReference type="UniPathway" id="UPA00030"/>
<dbReference type="UniPathway" id="UPA00036">
    <property type="reaction ID" value="UER00495"/>
</dbReference>
<dbReference type="Proteomes" id="UP000000653">
    <property type="component" value="Chromosome"/>
</dbReference>
<dbReference type="GO" id="GO:0005886">
    <property type="term" value="C:plasma membrane"/>
    <property type="evidence" value="ECO:0007669"/>
    <property type="project" value="UniProtKB-SubCell"/>
</dbReference>
<dbReference type="GO" id="GO:0016780">
    <property type="term" value="F:phosphotransferase activity, for other substituted phosphate groups"/>
    <property type="evidence" value="ECO:0007669"/>
    <property type="project" value="UniProtKB-UniRule"/>
</dbReference>
<dbReference type="GO" id="GO:0099621">
    <property type="term" value="F:undecaprenyl-phosphate 4-deoxy-4-formamido-L-arabinose transferase activity"/>
    <property type="evidence" value="ECO:0007669"/>
    <property type="project" value="UniProtKB-EC"/>
</dbReference>
<dbReference type="GO" id="GO:0036108">
    <property type="term" value="P:4-amino-4-deoxy-alpha-L-arabinopyranosyl undecaprenyl phosphate biosynthetic process"/>
    <property type="evidence" value="ECO:0007669"/>
    <property type="project" value="UniProtKB-UniRule"/>
</dbReference>
<dbReference type="GO" id="GO:0009245">
    <property type="term" value="P:lipid A biosynthetic process"/>
    <property type="evidence" value="ECO:0007669"/>
    <property type="project" value="UniProtKB-UniRule"/>
</dbReference>
<dbReference type="GO" id="GO:0009103">
    <property type="term" value="P:lipopolysaccharide biosynthetic process"/>
    <property type="evidence" value="ECO:0007669"/>
    <property type="project" value="UniProtKB-UniRule"/>
</dbReference>
<dbReference type="GO" id="GO:0046677">
    <property type="term" value="P:response to antibiotic"/>
    <property type="evidence" value="ECO:0007669"/>
    <property type="project" value="UniProtKB-KW"/>
</dbReference>
<dbReference type="CDD" id="cd04187">
    <property type="entry name" value="DPM1_like_bac"/>
    <property type="match status" value="1"/>
</dbReference>
<dbReference type="FunFam" id="3.90.550.10:FF:000019">
    <property type="entry name" value="Undecaprenyl-phosphate 4-deoxy-4-formamido-L-arabinose transferase"/>
    <property type="match status" value="1"/>
</dbReference>
<dbReference type="Gene3D" id="3.90.550.10">
    <property type="entry name" value="Spore Coat Polysaccharide Biosynthesis Protein SpsA, Chain A"/>
    <property type="match status" value="1"/>
</dbReference>
<dbReference type="HAMAP" id="MF_01164">
    <property type="entry name" value="ArnC_transfer"/>
    <property type="match status" value="1"/>
</dbReference>
<dbReference type="InterPro" id="IPR022857">
    <property type="entry name" value="ArnC_tfrase"/>
</dbReference>
<dbReference type="InterPro" id="IPR001173">
    <property type="entry name" value="Glyco_trans_2-like"/>
</dbReference>
<dbReference type="InterPro" id="IPR050256">
    <property type="entry name" value="Glycosyltransferase_2"/>
</dbReference>
<dbReference type="InterPro" id="IPR029044">
    <property type="entry name" value="Nucleotide-diphossugar_trans"/>
</dbReference>
<dbReference type="NCBIfam" id="NF007986">
    <property type="entry name" value="PRK10714.1"/>
    <property type="match status" value="1"/>
</dbReference>
<dbReference type="PANTHER" id="PTHR48090:SF3">
    <property type="entry name" value="UNDECAPRENYL-PHOSPHATE 4-DEOXY-4-FORMAMIDO-L-ARABINOSE TRANSFERASE"/>
    <property type="match status" value="1"/>
</dbReference>
<dbReference type="PANTHER" id="PTHR48090">
    <property type="entry name" value="UNDECAPRENYL-PHOSPHATE 4-DEOXY-4-FORMAMIDO-L-ARABINOSE TRANSFERASE-RELATED"/>
    <property type="match status" value="1"/>
</dbReference>
<dbReference type="Pfam" id="PF00535">
    <property type="entry name" value="Glycos_transf_2"/>
    <property type="match status" value="1"/>
</dbReference>
<dbReference type="SUPFAM" id="SSF53448">
    <property type="entry name" value="Nucleotide-diphospho-sugar transferases"/>
    <property type="match status" value="1"/>
</dbReference>
<accession>Q02R24</accession>
<name>ARNC_PSEAB</name>